<evidence type="ECO:0000250" key="1">
    <source>
        <dbReference type="UniProtKB" id="Q9JII1"/>
    </source>
</evidence>
<evidence type="ECO:0000250" key="2">
    <source>
        <dbReference type="UniProtKB" id="Q9NRR6"/>
    </source>
</evidence>
<evidence type="ECO:0000256" key="3">
    <source>
        <dbReference type="SAM" id="MobiDB-lite"/>
    </source>
</evidence>
<evidence type="ECO:0000269" key="4">
    <source>
    </source>
</evidence>
<evidence type="ECO:0000303" key="5">
    <source>
    </source>
</evidence>
<evidence type="ECO:0000305" key="6"/>
<evidence type="ECO:0000305" key="7">
    <source>
    </source>
</evidence>
<evidence type="ECO:0007744" key="8">
    <source>
    </source>
</evidence>
<name>INP5E_RAT</name>
<feature type="chain" id="PRO_0000209749" description="Phosphatidylinositol polyphosphate 5-phosphatase type IV" evidence="2">
    <location>
        <begin position="1"/>
        <end position="645"/>
    </location>
</feature>
<feature type="propeptide" id="PRO_0000431691" description="Removed in mature form" evidence="2">
    <location>
        <begin position="646"/>
        <end position="648"/>
    </location>
</feature>
<feature type="repeat" description="1">
    <location>
        <begin position="59"/>
        <end position="62"/>
    </location>
</feature>
<feature type="repeat" description="2">
    <location>
        <begin position="76"/>
        <end position="79"/>
    </location>
</feature>
<feature type="repeat" description="3">
    <location>
        <begin position="147"/>
        <end position="150"/>
    </location>
</feature>
<feature type="repeat" description="4">
    <location>
        <begin position="240"/>
        <end position="243"/>
    </location>
</feature>
<feature type="region of interest" description="Disordered" evidence="3">
    <location>
        <begin position="1"/>
        <end position="64"/>
    </location>
</feature>
<feature type="region of interest" description="4 X 4 AA repeats of P-X-X-P">
    <location>
        <begin position="59"/>
        <end position="243"/>
    </location>
</feature>
<feature type="region of interest" description="Disordered" evidence="3">
    <location>
        <begin position="99"/>
        <end position="158"/>
    </location>
</feature>
<feature type="compositionally biased region" description="Polar residues" evidence="3">
    <location>
        <begin position="36"/>
        <end position="54"/>
    </location>
</feature>
<feature type="compositionally biased region" description="Polar residues" evidence="3">
    <location>
        <begin position="120"/>
        <end position="129"/>
    </location>
</feature>
<feature type="modified residue" description="Phosphoserine" evidence="2">
    <location>
        <position position="103"/>
    </location>
</feature>
<feature type="modified residue" description="Phosphothreonine" evidence="1">
    <location>
        <position position="197"/>
    </location>
</feature>
<feature type="modified residue" description="Phosphoserine" evidence="8">
    <location>
        <position position="245"/>
    </location>
</feature>
<feature type="modified residue" description="Phosphoserine" evidence="1">
    <location>
        <position position="260"/>
    </location>
</feature>
<feature type="modified residue" description="Cysteine methyl ester" evidence="2">
    <location>
        <position position="645"/>
    </location>
</feature>
<feature type="lipid moiety-binding region" description="S-farnesyl cysteine" evidence="2">
    <location>
        <position position="645"/>
    </location>
</feature>
<accession>Q9WVR1</accession>
<accession>A0A0G2K6T4</accession>
<reference key="1">
    <citation type="journal article" date="1999" name="Biochem. Biophys. Res. Commun.">
        <title>Pharbin, a novel inositol polyphosphate 5-phosphatase, induces dendritic appearances in fibroblasts.</title>
        <authorList>
            <person name="Asano T."/>
            <person name="Mochizuki Y."/>
            <person name="Matsumoto K."/>
            <person name="Takenawa T."/>
            <person name="Endo T."/>
        </authorList>
    </citation>
    <scope>NUCLEOTIDE SEQUENCE [MRNA]</scope>
    <scope>FUNCTION</scope>
    <scope>CATALYTIC ACTIVITY</scope>
    <scope>SUBCELLULAR LOCATION</scope>
    <source>
        <tissue>Brain</tissue>
    </source>
</reference>
<reference key="2">
    <citation type="journal article" date="2004" name="Nature">
        <title>Genome sequence of the Brown Norway rat yields insights into mammalian evolution.</title>
        <authorList>
            <person name="Gibbs R.A."/>
            <person name="Weinstock G.M."/>
            <person name="Metzker M.L."/>
            <person name="Muzny D.M."/>
            <person name="Sodergren E.J."/>
            <person name="Scherer S."/>
            <person name="Scott G."/>
            <person name="Steffen D."/>
            <person name="Worley K.C."/>
            <person name="Burch P.E."/>
            <person name="Okwuonu G."/>
            <person name="Hines S."/>
            <person name="Lewis L."/>
            <person name="Deramo C."/>
            <person name="Delgado O."/>
            <person name="Dugan-Rocha S."/>
            <person name="Miner G."/>
            <person name="Morgan M."/>
            <person name="Hawes A."/>
            <person name="Gill R."/>
            <person name="Holt R.A."/>
            <person name="Adams M.D."/>
            <person name="Amanatides P.G."/>
            <person name="Baden-Tillson H."/>
            <person name="Barnstead M."/>
            <person name="Chin S."/>
            <person name="Evans C.A."/>
            <person name="Ferriera S."/>
            <person name="Fosler C."/>
            <person name="Glodek A."/>
            <person name="Gu Z."/>
            <person name="Jennings D."/>
            <person name="Kraft C.L."/>
            <person name="Nguyen T."/>
            <person name="Pfannkoch C.M."/>
            <person name="Sitter C."/>
            <person name="Sutton G.G."/>
            <person name="Venter J.C."/>
            <person name="Woodage T."/>
            <person name="Smith D."/>
            <person name="Lee H.-M."/>
            <person name="Gustafson E."/>
            <person name="Cahill P."/>
            <person name="Kana A."/>
            <person name="Doucette-Stamm L."/>
            <person name="Weinstock K."/>
            <person name="Fechtel K."/>
            <person name="Weiss R.B."/>
            <person name="Dunn D.M."/>
            <person name="Green E.D."/>
            <person name="Blakesley R.W."/>
            <person name="Bouffard G.G."/>
            <person name="De Jong P.J."/>
            <person name="Osoegawa K."/>
            <person name="Zhu B."/>
            <person name="Marra M."/>
            <person name="Schein J."/>
            <person name="Bosdet I."/>
            <person name="Fjell C."/>
            <person name="Jones S."/>
            <person name="Krzywinski M."/>
            <person name="Mathewson C."/>
            <person name="Siddiqui A."/>
            <person name="Wye N."/>
            <person name="McPherson J."/>
            <person name="Zhao S."/>
            <person name="Fraser C.M."/>
            <person name="Shetty J."/>
            <person name="Shatsman S."/>
            <person name="Geer K."/>
            <person name="Chen Y."/>
            <person name="Abramzon S."/>
            <person name="Nierman W.C."/>
            <person name="Havlak P.H."/>
            <person name="Chen R."/>
            <person name="Durbin K.J."/>
            <person name="Egan A."/>
            <person name="Ren Y."/>
            <person name="Song X.-Z."/>
            <person name="Li B."/>
            <person name="Liu Y."/>
            <person name="Qin X."/>
            <person name="Cawley S."/>
            <person name="Cooney A.J."/>
            <person name="D'Souza L.M."/>
            <person name="Martin K."/>
            <person name="Wu J.Q."/>
            <person name="Gonzalez-Garay M.L."/>
            <person name="Jackson A.R."/>
            <person name="Kalafus K.J."/>
            <person name="McLeod M.P."/>
            <person name="Milosavljevic A."/>
            <person name="Virk D."/>
            <person name="Volkov A."/>
            <person name="Wheeler D.A."/>
            <person name="Zhang Z."/>
            <person name="Bailey J.A."/>
            <person name="Eichler E.E."/>
            <person name="Tuzun E."/>
            <person name="Birney E."/>
            <person name="Mongin E."/>
            <person name="Ureta-Vidal A."/>
            <person name="Woodwark C."/>
            <person name="Zdobnov E."/>
            <person name="Bork P."/>
            <person name="Suyama M."/>
            <person name="Torrents D."/>
            <person name="Alexandersson M."/>
            <person name="Trask B.J."/>
            <person name="Young J.M."/>
            <person name="Huang H."/>
            <person name="Wang H."/>
            <person name="Xing H."/>
            <person name="Daniels S."/>
            <person name="Gietzen D."/>
            <person name="Schmidt J."/>
            <person name="Stevens K."/>
            <person name="Vitt U."/>
            <person name="Wingrove J."/>
            <person name="Camara F."/>
            <person name="Mar Alba M."/>
            <person name="Abril J.F."/>
            <person name="Guigo R."/>
            <person name="Smit A."/>
            <person name="Dubchak I."/>
            <person name="Rubin E.M."/>
            <person name="Couronne O."/>
            <person name="Poliakov A."/>
            <person name="Huebner N."/>
            <person name="Ganten D."/>
            <person name="Goesele C."/>
            <person name="Hummel O."/>
            <person name="Kreitler T."/>
            <person name="Lee Y.-A."/>
            <person name="Monti J."/>
            <person name="Schulz H."/>
            <person name="Zimdahl H."/>
            <person name="Himmelbauer H."/>
            <person name="Lehrach H."/>
            <person name="Jacob H.J."/>
            <person name="Bromberg S."/>
            <person name="Gullings-Handley J."/>
            <person name="Jensen-Seaman M.I."/>
            <person name="Kwitek A.E."/>
            <person name="Lazar J."/>
            <person name="Pasko D."/>
            <person name="Tonellato P.J."/>
            <person name="Twigger S."/>
            <person name="Ponting C.P."/>
            <person name="Duarte J.M."/>
            <person name="Rice S."/>
            <person name="Goodstadt L."/>
            <person name="Beatson S.A."/>
            <person name="Emes R.D."/>
            <person name="Winter E.E."/>
            <person name="Webber C."/>
            <person name="Brandt P."/>
            <person name="Nyakatura G."/>
            <person name="Adetobi M."/>
            <person name="Chiaromonte F."/>
            <person name="Elnitski L."/>
            <person name="Eswara P."/>
            <person name="Hardison R.C."/>
            <person name="Hou M."/>
            <person name="Kolbe D."/>
            <person name="Makova K."/>
            <person name="Miller W."/>
            <person name="Nekrutenko A."/>
            <person name="Riemer C."/>
            <person name="Schwartz S."/>
            <person name="Taylor J."/>
            <person name="Yang S."/>
            <person name="Zhang Y."/>
            <person name="Lindpaintner K."/>
            <person name="Andrews T.D."/>
            <person name="Caccamo M."/>
            <person name="Clamp M."/>
            <person name="Clarke L."/>
            <person name="Curwen V."/>
            <person name="Durbin R.M."/>
            <person name="Eyras E."/>
            <person name="Searle S.M."/>
            <person name="Cooper G.M."/>
            <person name="Batzoglou S."/>
            <person name="Brudno M."/>
            <person name="Sidow A."/>
            <person name="Stone E.A."/>
            <person name="Payseur B.A."/>
            <person name="Bourque G."/>
            <person name="Lopez-Otin C."/>
            <person name="Puente X.S."/>
            <person name="Chakrabarti K."/>
            <person name="Chatterji S."/>
            <person name="Dewey C."/>
            <person name="Pachter L."/>
            <person name="Bray N."/>
            <person name="Yap V.B."/>
            <person name="Caspi A."/>
            <person name="Tesler G."/>
            <person name="Pevzner P.A."/>
            <person name="Haussler D."/>
            <person name="Roskin K.M."/>
            <person name="Baertsch R."/>
            <person name="Clawson H."/>
            <person name="Furey T.S."/>
            <person name="Hinrichs A.S."/>
            <person name="Karolchik D."/>
            <person name="Kent W.J."/>
            <person name="Rosenbloom K.R."/>
            <person name="Trumbower H."/>
            <person name="Weirauch M."/>
            <person name="Cooper D.N."/>
            <person name="Stenson P.D."/>
            <person name="Ma B."/>
            <person name="Brent M."/>
            <person name="Arumugam M."/>
            <person name="Shteynberg D."/>
            <person name="Copley R.R."/>
            <person name="Taylor M.S."/>
            <person name="Riethman H."/>
            <person name="Mudunuri U."/>
            <person name="Peterson J."/>
            <person name="Guyer M."/>
            <person name="Felsenfeld A."/>
            <person name="Old S."/>
            <person name="Mockrin S."/>
            <person name="Collins F.S."/>
        </authorList>
    </citation>
    <scope>NUCLEOTIDE SEQUENCE [LARGE SCALE GENOMIC DNA]</scope>
</reference>
<reference key="3">
    <citation type="submission" date="2005-09" db="EMBL/GenBank/DDBJ databases">
        <authorList>
            <person name="Mural R.J."/>
            <person name="Adams M.D."/>
            <person name="Myers E.W."/>
            <person name="Smith H.O."/>
            <person name="Venter J.C."/>
        </authorList>
    </citation>
    <scope>NUCLEOTIDE SEQUENCE [LARGE SCALE GENOMIC DNA]</scope>
</reference>
<reference key="4">
    <citation type="journal article" date="2012" name="Nat. Commun.">
        <title>Quantitative maps of protein phosphorylation sites across 14 different rat organs and tissues.</title>
        <authorList>
            <person name="Lundby A."/>
            <person name="Secher A."/>
            <person name="Lage K."/>
            <person name="Nordsborg N.B."/>
            <person name="Dmytriyev A."/>
            <person name="Lundby C."/>
            <person name="Olsen J.V."/>
        </authorList>
    </citation>
    <scope>PHOSPHORYLATION [LARGE SCALE ANALYSIS] AT SER-245</scope>
    <scope>IDENTIFICATION BY MASS SPECTROMETRY [LARGE SCALE ANALYSIS]</scope>
</reference>
<proteinExistence type="evidence at protein level"/>
<keyword id="KW-1003">Cell membrane</keyword>
<keyword id="KW-0966">Cell projection</keyword>
<keyword id="KW-0969">Cilium</keyword>
<keyword id="KW-0963">Cytoplasm</keyword>
<keyword id="KW-0206">Cytoskeleton</keyword>
<keyword id="KW-0333">Golgi apparatus</keyword>
<keyword id="KW-0378">Hydrolase</keyword>
<keyword id="KW-0443">Lipid metabolism</keyword>
<keyword id="KW-0449">Lipoprotein</keyword>
<keyword id="KW-0472">Membrane</keyword>
<keyword id="KW-0488">Methylation</keyword>
<keyword id="KW-0539">Nucleus</keyword>
<keyword id="KW-0597">Phosphoprotein</keyword>
<keyword id="KW-0636">Prenylation</keyword>
<keyword id="KW-1185">Reference proteome</keyword>
<keyword id="KW-0677">Repeat</keyword>
<protein>
    <recommendedName>
        <fullName>Phosphatidylinositol polyphosphate 5-phosphatase type IV</fullName>
    </recommendedName>
    <alternativeName>
        <fullName evidence="5">5-phosphatase that induces arborization</fullName>
        <shortName evidence="5">Pharbin</shortName>
    </alternativeName>
    <alternativeName>
        <fullName>72 kDa inositol polyphosphate 5-phosphatase</fullName>
    </alternativeName>
    <alternativeName>
        <fullName>Inositol polyphosphate-5-phosphatase E</fullName>
    </alternativeName>
    <alternativeName>
        <fullName>Phosphatidylinositol 4,5-bisphosphate 5-phosphatase</fullName>
        <ecNumber evidence="4">3.1.3.36</ecNumber>
    </alternativeName>
    <alternativeName>
        <fullName>Phosphatidylinositol-3,4,5-trisphosphate 5-phosphatase</fullName>
        <ecNumber evidence="2">3.1.3.86</ecNumber>
    </alternativeName>
</protein>
<sequence length="648" mass="72040">MPSKSACLRHTEAPGQLEGRMLQGQLSNPEKKLIPTSASLPAADSQSSQTNSMPPLSMPAKPSNQNLQAKANLITPQPPIRPKLERTLSLDDKGWRRRRFRGSQEDLTVQNGASPCRGSLQDSVAQSPAYSRPLPCLSTSLQEIPKPRRATGSEGGSPSLWSDCLSGMISTSLDLLHREAASGGPHSRLASLRATHTPPAMDLNIASSSLRTANKVDPEHTDYKLRMQNRLVRAHSNLGPSRPRSPLAGDDHSIHSARSSFSLLAPIRTKDIRSRSYLEGSLLASGALLGADELARYFPDRNMALFVATWNMQGQKELPASLDEFLLPTEADYTQDLYVIGVQEGCSDRREWETRLQETLGPQYVLLSSAAHGVLYMSLFIRRDLIWFCSEVEYSTVTTRIVSQIKTKGALGVSFTFFGTSFLFITSHFTSGDGKVAERLLDYNRTIQALALPRNVPDTNPYRSSAGDVTTRFDEVFWFGDFNFRLSGGRVAVEAFLKQDPEVDVLALLQHDQLTREMKKGSIFKGFEEAEIHFLPSYKFDIGKDTYDSTSKQRTPSYTDRVLYKSRHKGDICPMKYSSCPGIKTSDHRPVYGLFRVKVRPGRDNIPLAAGKFDRELYLIGIKRRISKEIQRQEALKSQSSSAVCTVS</sequence>
<dbReference type="EC" id="3.1.3.36" evidence="4"/>
<dbReference type="EC" id="3.1.3.86" evidence="2"/>
<dbReference type="EMBL" id="AB026288">
    <property type="protein sequence ID" value="BAA82150.1"/>
    <property type="status" value="ALT_SEQ"/>
    <property type="molecule type" value="mRNA"/>
</dbReference>
<dbReference type="EMBL" id="AC129824">
    <property type="status" value="NOT_ANNOTATED_CDS"/>
    <property type="molecule type" value="Genomic_DNA"/>
</dbReference>
<dbReference type="EMBL" id="CH474001">
    <property type="protein sequence ID" value="EDL93496.1"/>
    <property type="molecule type" value="Genomic_DNA"/>
</dbReference>
<dbReference type="EMBL" id="CH474001">
    <property type="protein sequence ID" value="EDL93498.1"/>
    <property type="molecule type" value="Genomic_DNA"/>
</dbReference>
<dbReference type="RefSeq" id="NP_001416555.1">
    <property type="nucleotide sequence ID" value="NM_001429626.1"/>
</dbReference>
<dbReference type="RefSeq" id="NP_446084.1">
    <property type="nucleotide sequence ID" value="NM_053632.1"/>
</dbReference>
<dbReference type="RefSeq" id="XP_006233729.1">
    <property type="nucleotide sequence ID" value="XM_006233667.3"/>
</dbReference>
<dbReference type="SMR" id="Q9WVR1"/>
<dbReference type="FunCoup" id="Q9WVR1">
    <property type="interactions" value="2251"/>
</dbReference>
<dbReference type="STRING" id="10116.ENSRNOP00000073935"/>
<dbReference type="iPTMnet" id="Q9WVR1"/>
<dbReference type="PhosphoSitePlus" id="Q9WVR1"/>
<dbReference type="PaxDb" id="10116-ENSRNOP00000025763"/>
<dbReference type="Ensembl" id="ENSRNOT00000079882.2">
    <property type="protein sequence ID" value="ENSRNOP00000073935.1"/>
    <property type="gene ID" value="ENSRNOG00000019039.8"/>
</dbReference>
<dbReference type="GeneID" id="114089"/>
<dbReference type="KEGG" id="rno:114089"/>
<dbReference type="UCSC" id="RGD:620478">
    <property type="organism name" value="rat"/>
</dbReference>
<dbReference type="AGR" id="RGD:620478"/>
<dbReference type="CTD" id="56623"/>
<dbReference type="RGD" id="620478">
    <property type="gene designation" value="Inpp5e"/>
</dbReference>
<dbReference type="eggNOG" id="KOG0565">
    <property type="taxonomic scope" value="Eukaryota"/>
</dbReference>
<dbReference type="GeneTree" id="ENSGT00940000158199"/>
<dbReference type="InParanoid" id="Q9WVR1"/>
<dbReference type="OMA" id="HADYKLR"/>
<dbReference type="OrthoDB" id="2248459at2759"/>
<dbReference type="Reactome" id="R-RNO-1660514">
    <property type="pathway name" value="Synthesis of PIPs at the Golgi membrane"/>
</dbReference>
<dbReference type="Reactome" id="R-RNO-5624958">
    <property type="pathway name" value="ARL13B-mediated ciliary trafficking of INPP5E"/>
</dbReference>
<dbReference type="PRO" id="PR:Q9WVR1"/>
<dbReference type="Proteomes" id="UP000002494">
    <property type="component" value="Chromosome 3"/>
</dbReference>
<dbReference type="Proteomes" id="UP000234681">
    <property type="component" value="Chromosome 3"/>
</dbReference>
<dbReference type="Bgee" id="ENSRNOG00000019039">
    <property type="expression patterns" value="Expressed in testis and 20 other cell types or tissues"/>
</dbReference>
<dbReference type="ExpressionAtlas" id="Q9WVR1">
    <property type="expression patterns" value="baseline and differential"/>
</dbReference>
<dbReference type="GO" id="GO:0005930">
    <property type="term" value="C:axoneme"/>
    <property type="evidence" value="ECO:0000250"/>
    <property type="project" value="UniProtKB"/>
</dbReference>
<dbReference type="GO" id="GO:0005929">
    <property type="term" value="C:cilium"/>
    <property type="evidence" value="ECO:0000266"/>
    <property type="project" value="RGD"/>
</dbReference>
<dbReference type="GO" id="GO:0005794">
    <property type="term" value="C:Golgi apparatus"/>
    <property type="evidence" value="ECO:0000318"/>
    <property type="project" value="GO_Central"/>
</dbReference>
<dbReference type="GO" id="GO:0032580">
    <property type="term" value="C:Golgi cisterna membrane"/>
    <property type="evidence" value="ECO:0007669"/>
    <property type="project" value="UniProtKB-SubCell"/>
</dbReference>
<dbReference type="GO" id="GO:0000139">
    <property type="term" value="C:Golgi membrane"/>
    <property type="evidence" value="ECO:0000266"/>
    <property type="project" value="RGD"/>
</dbReference>
<dbReference type="GO" id="GO:0005634">
    <property type="term" value="C:nucleus"/>
    <property type="evidence" value="ECO:0000250"/>
    <property type="project" value="UniProtKB"/>
</dbReference>
<dbReference type="GO" id="GO:0005886">
    <property type="term" value="C:plasma membrane"/>
    <property type="evidence" value="ECO:0007669"/>
    <property type="project" value="UniProtKB-SubCell"/>
</dbReference>
<dbReference type="GO" id="GO:0001726">
    <property type="term" value="C:ruffle"/>
    <property type="evidence" value="ECO:0000314"/>
    <property type="project" value="RGD"/>
</dbReference>
<dbReference type="GO" id="GO:0004445">
    <property type="term" value="F:inositol-polyphosphate 5-phosphatase activity"/>
    <property type="evidence" value="ECO:0000314"/>
    <property type="project" value="RGD"/>
</dbReference>
<dbReference type="GO" id="GO:0016314">
    <property type="term" value="F:phosphatidylinositol-3,4,5-trisphosphate 3-phosphatase activity"/>
    <property type="evidence" value="ECO:0000314"/>
    <property type="project" value="RGD"/>
</dbReference>
<dbReference type="GO" id="GO:0034485">
    <property type="term" value="F:phosphatidylinositol-3,4,5-trisphosphate 5-phosphatase activity"/>
    <property type="evidence" value="ECO:0007669"/>
    <property type="project" value="UniProtKB-EC"/>
</dbReference>
<dbReference type="GO" id="GO:0043813">
    <property type="term" value="F:phosphatidylinositol-3,5-bisphosphate 5-phosphatase activity"/>
    <property type="evidence" value="ECO:0007669"/>
    <property type="project" value="RHEA"/>
</dbReference>
<dbReference type="GO" id="GO:0004439">
    <property type="term" value="F:phosphatidylinositol-4,5-bisphosphate 5-phosphatase activity"/>
    <property type="evidence" value="ECO:0000266"/>
    <property type="project" value="RGD"/>
</dbReference>
<dbReference type="GO" id="GO:0106019">
    <property type="term" value="F:phosphatidylinositol-4,5-bisphosphate phosphatase activity"/>
    <property type="evidence" value="ECO:0000314"/>
    <property type="project" value="RGD"/>
</dbReference>
<dbReference type="GO" id="GO:0060271">
    <property type="term" value="P:cilium assembly"/>
    <property type="evidence" value="ECO:0000266"/>
    <property type="project" value="RGD"/>
</dbReference>
<dbReference type="GO" id="GO:0051898">
    <property type="term" value="P:negative regulation of phosphatidylinositol 3-kinase/protein kinase B signal transduction"/>
    <property type="evidence" value="ECO:0000314"/>
    <property type="project" value="RGD"/>
</dbReference>
<dbReference type="GO" id="GO:1903565">
    <property type="term" value="P:negative regulation of protein localization to cilium"/>
    <property type="evidence" value="ECO:0000266"/>
    <property type="project" value="RGD"/>
</dbReference>
<dbReference type="GO" id="GO:0017148">
    <property type="term" value="P:negative regulation of translation"/>
    <property type="evidence" value="ECO:0000314"/>
    <property type="project" value="RGD"/>
</dbReference>
<dbReference type="GO" id="GO:0046856">
    <property type="term" value="P:phosphatidylinositol dephosphorylation"/>
    <property type="evidence" value="ECO:0000266"/>
    <property type="project" value="RGD"/>
</dbReference>
<dbReference type="GO" id="GO:0046488">
    <property type="term" value="P:phosphatidylinositol metabolic process"/>
    <property type="evidence" value="ECO:0000266"/>
    <property type="project" value="RGD"/>
</dbReference>
<dbReference type="GO" id="GO:1902140">
    <property type="term" value="P:response to inositol"/>
    <property type="evidence" value="ECO:0000266"/>
    <property type="project" value="RGD"/>
</dbReference>
<dbReference type="CDD" id="cd09095">
    <property type="entry name" value="INPP5c_INPP5E-like"/>
    <property type="match status" value="1"/>
</dbReference>
<dbReference type="FunFam" id="3.60.10.10:FF:000039">
    <property type="entry name" value="72 kDa inositol polyphosphate 5-phosphatase"/>
    <property type="match status" value="1"/>
</dbReference>
<dbReference type="Gene3D" id="3.60.10.10">
    <property type="entry name" value="Endonuclease/exonuclease/phosphatase"/>
    <property type="match status" value="1"/>
</dbReference>
<dbReference type="InterPro" id="IPR036691">
    <property type="entry name" value="Endo/exonu/phosph_ase_sf"/>
</dbReference>
<dbReference type="InterPro" id="IPR042478">
    <property type="entry name" value="INPP5E"/>
</dbReference>
<dbReference type="InterPro" id="IPR000300">
    <property type="entry name" value="IPPc"/>
</dbReference>
<dbReference type="PANTHER" id="PTHR46625">
    <property type="entry name" value="72 KDA INOSITOL POLYPHOSPHATE 5-PHOSPHATASE"/>
    <property type="match status" value="1"/>
</dbReference>
<dbReference type="PANTHER" id="PTHR46625:SF1">
    <property type="entry name" value="PHOSPHATIDYLINOSITOL POLYPHOSPHATE 5-PHOSPHATASE TYPE IV"/>
    <property type="match status" value="1"/>
</dbReference>
<dbReference type="Pfam" id="PF22669">
    <property type="entry name" value="Exo_endo_phos2"/>
    <property type="match status" value="1"/>
</dbReference>
<dbReference type="SMART" id="SM00128">
    <property type="entry name" value="IPPc"/>
    <property type="match status" value="1"/>
</dbReference>
<dbReference type="SUPFAM" id="SSF56219">
    <property type="entry name" value="DNase I-like"/>
    <property type="match status" value="1"/>
</dbReference>
<comment type="function">
    <text evidence="1 2 4">Phosphatidylinositol (PtdIns) phosphatase that specifically hydrolyzes the 5-phosphate of phosphatidylinositol-3,4,5-trisphosphate (PtdIns(3,4,5)P3), phosphatidylinositol 4,5-bisphosphate PtdIns (4,5)P2 and phosphatidylinositol 3,5-bisphosphate (PtdIns(3,5)P2). Specific for lipid substrates, inactive towards water soluble inositol phosphates (By similarity) (PubMed:10405344). Plays an essential role in the primary cilium by controlling ciliary growth and phosphoinositide 3-kinase (PI3K) signaling and stability (By similarity).</text>
</comment>
<comment type="catalytic activity">
    <reaction evidence="4">
        <text>a 1,2-diacyl-sn-glycero-3-phospho-(1D-myo-inositol-4,5-bisphosphate) + H2O = a 1,2-diacyl-sn-glycero-3-phospho-(1D-myo-inositol 4-phosphate) + phosphate</text>
        <dbReference type="Rhea" id="RHEA:22764"/>
        <dbReference type="ChEBI" id="CHEBI:15377"/>
        <dbReference type="ChEBI" id="CHEBI:43474"/>
        <dbReference type="ChEBI" id="CHEBI:58178"/>
        <dbReference type="ChEBI" id="CHEBI:58456"/>
        <dbReference type="EC" id="3.1.3.36"/>
    </reaction>
    <physiologicalReaction direction="left-to-right" evidence="7">
        <dbReference type="Rhea" id="RHEA:22765"/>
    </physiologicalReaction>
</comment>
<comment type="catalytic activity">
    <reaction evidence="2">
        <text>a 1,2-diacyl-sn-glycero-3-phospho-(1D-myo-inositol-3,4,5-trisphosphate) + H2O = a 1,2-diacyl-sn-glycero-3-phospho-(1D-myo-inositol-3,4-bisphosphate) + phosphate</text>
        <dbReference type="Rhea" id="RHEA:25528"/>
        <dbReference type="ChEBI" id="CHEBI:15377"/>
        <dbReference type="ChEBI" id="CHEBI:43474"/>
        <dbReference type="ChEBI" id="CHEBI:57658"/>
        <dbReference type="ChEBI" id="CHEBI:57836"/>
        <dbReference type="EC" id="3.1.3.86"/>
    </reaction>
    <physiologicalReaction direction="left-to-right" evidence="2">
        <dbReference type="Rhea" id="RHEA:25529"/>
    </physiologicalReaction>
</comment>
<comment type="catalytic activity">
    <reaction evidence="1">
        <text>a 1,2-diacyl-sn-glycero-3-phospho-(1D-myo-inositol-3,5-bisphosphate) + H2O = a 1,2-diacyl-sn-glycero-3-phospho-(1D-myo-inositol-3-phosphate) + phosphate</text>
        <dbReference type="Rhea" id="RHEA:32955"/>
        <dbReference type="ChEBI" id="CHEBI:15377"/>
        <dbReference type="ChEBI" id="CHEBI:43474"/>
        <dbReference type="ChEBI" id="CHEBI:57923"/>
        <dbReference type="ChEBI" id="CHEBI:58088"/>
    </reaction>
    <physiologicalReaction direction="left-to-right" evidence="1">
        <dbReference type="Rhea" id="RHEA:32956"/>
    </physiologicalReaction>
</comment>
<comment type="subunit">
    <text evidence="2">Interacts (when prenylated) with PDE6D; this is important for normal location in cilia.</text>
</comment>
<comment type="subcellular location">
    <subcellularLocation>
        <location evidence="1">Cytoplasm</location>
        <location evidence="1">Cytoskeleton</location>
        <location evidence="1">Cilium axoneme</location>
    </subcellularLocation>
    <subcellularLocation>
        <location evidence="1">Golgi apparatus</location>
        <location evidence="1">Golgi stack membrane</location>
        <topology evidence="1">Peripheral membrane protein</topology>
        <orientation evidence="1">Cytoplasmic side</orientation>
    </subcellularLocation>
    <subcellularLocation>
        <location evidence="4">Cell membrane</location>
        <topology evidence="4">Peripheral membrane protein</topology>
        <orientation evidence="4">Cytoplasmic side</orientation>
    </subcellularLocation>
    <subcellularLocation>
        <location evidence="4">Cell projection</location>
        <location evidence="4">Ruffle</location>
    </subcellularLocation>
    <subcellularLocation>
        <location evidence="4">Cytoplasm</location>
    </subcellularLocation>
    <subcellularLocation>
        <location evidence="1">Nucleus</location>
    </subcellularLocation>
    <text evidence="1">Peripheral membrane protein associated with Golgi stacks.</text>
</comment>
<comment type="similarity">
    <text evidence="6">Belongs to the inositol 1,4,5-trisphosphate 5-phosphatase type IV family.</text>
</comment>
<comment type="sequence caution" evidence="6">
    <conflict type="erroneous initiation">
        <sequence resource="EMBL-CDS" id="BAA82150"/>
    </conflict>
    <text>Truncated N-terminus.</text>
</comment>
<comment type="sequence caution" evidence="6">
    <conflict type="frameshift">
        <sequence resource="EMBL-CDS" id="BAA82150"/>
    </conflict>
</comment>
<organism>
    <name type="scientific">Rattus norvegicus</name>
    <name type="common">Rat</name>
    <dbReference type="NCBI Taxonomy" id="10116"/>
    <lineage>
        <taxon>Eukaryota</taxon>
        <taxon>Metazoa</taxon>
        <taxon>Chordata</taxon>
        <taxon>Craniata</taxon>
        <taxon>Vertebrata</taxon>
        <taxon>Euteleostomi</taxon>
        <taxon>Mammalia</taxon>
        <taxon>Eutheria</taxon>
        <taxon>Euarchontoglires</taxon>
        <taxon>Glires</taxon>
        <taxon>Rodentia</taxon>
        <taxon>Myomorpha</taxon>
        <taxon>Muroidea</taxon>
        <taxon>Muridae</taxon>
        <taxon>Murinae</taxon>
        <taxon>Rattus</taxon>
    </lineage>
</organism>
<gene>
    <name type="primary">Inpp5e</name>
</gene>